<organism>
    <name type="scientific">Citrobacter koseri (strain ATCC BAA-895 / CDC 4225-83 / SGSC4696)</name>
    <dbReference type="NCBI Taxonomy" id="290338"/>
    <lineage>
        <taxon>Bacteria</taxon>
        <taxon>Pseudomonadati</taxon>
        <taxon>Pseudomonadota</taxon>
        <taxon>Gammaproteobacteria</taxon>
        <taxon>Enterobacterales</taxon>
        <taxon>Enterobacteriaceae</taxon>
        <taxon>Citrobacter</taxon>
    </lineage>
</organism>
<evidence type="ECO:0000255" key="1">
    <source>
        <dbReference type="HAMAP-Rule" id="MF_00815"/>
    </source>
</evidence>
<comment type="function">
    <text evidence="1">Produces ATP from ADP in the presence of a proton gradient across the membrane. The gamma chain is believed to be important in regulating ATPase activity and the flow of protons through the CF(0) complex.</text>
</comment>
<comment type="subunit">
    <text evidence="1">F-type ATPases have 2 components, CF(1) - the catalytic core - and CF(0) - the membrane proton channel. CF(1) has five subunits: alpha(3), beta(3), gamma(1), delta(1), epsilon(1). CF(0) has three main subunits: a, b and c.</text>
</comment>
<comment type="subcellular location">
    <subcellularLocation>
        <location evidence="1">Cell inner membrane</location>
        <topology evidence="1">Peripheral membrane protein</topology>
    </subcellularLocation>
</comment>
<comment type="similarity">
    <text evidence="1">Belongs to the ATPase gamma chain family.</text>
</comment>
<protein>
    <recommendedName>
        <fullName evidence="1">ATP synthase gamma chain</fullName>
    </recommendedName>
    <alternativeName>
        <fullName evidence="1">ATP synthase F1 sector gamma subunit</fullName>
    </alternativeName>
    <alternativeName>
        <fullName evidence="1">F-ATPase gamma subunit</fullName>
    </alternativeName>
</protein>
<proteinExistence type="inferred from homology"/>
<sequence>MAGAKEIRSKIASVQNTQKITKAMEMVAASKMRKSQDRMAASRPYADTMRKVIGHLANGNLEYKHPYLEERDVKRVGYLVVSTDRGLCGGLNINLFKKLLADMKAWSDKGVQCDLAMIGSKGVSFFSSVGGNVVAQVTGMGDNPSLSELIGPVKVMLQAYDEGRLDKLYIVSNKFINTMSQVPTITQLLPLPASEDDELKRKTWDYLYEPDPKALLDTLLRRYVESQVYQGVVENLASEQAARMVSMKAATDNGGSLIKELQLVYNKARQASITQELTEIVGGASAV</sequence>
<dbReference type="EMBL" id="CP000822">
    <property type="protein sequence ID" value="ABV11250.1"/>
    <property type="molecule type" value="Genomic_DNA"/>
</dbReference>
<dbReference type="RefSeq" id="WP_012000830.1">
    <property type="nucleotide sequence ID" value="NC_009792.1"/>
</dbReference>
<dbReference type="SMR" id="A8ACN7"/>
<dbReference type="STRING" id="290338.CKO_00071"/>
<dbReference type="GeneID" id="45134374"/>
<dbReference type="KEGG" id="cko:CKO_00071"/>
<dbReference type="HOGENOM" id="CLU_050669_0_1_6"/>
<dbReference type="OrthoDB" id="9812769at2"/>
<dbReference type="Proteomes" id="UP000008148">
    <property type="component" value="Chromosome"/>
</dbReference>
<dbReference type="GO" id="GO:0005886">
    <property type="term" value="C:plasma membrane"/>
    <property type="evidence" value="ECO:0007669"/>
    <property type="project" value="UniProtKB-SubCell"/>
</dbReference>
<dbReference type="GO" id="GO:0045259">
    <property type="term" value="C:proton-transporting ATP synthase complex"/>
    <property type="evidence" value="ECO:0007669"/>
    <property type="project" value="UniProtKB-KW"/>
</dbReference>
<dbReference type="GO" id="GO:0005524">
    <property type="term" value="F:ATP binding"/>
    <property type="evidence" value="ECO:0007669"/>
    <property type="project" value="UniProtKB-UniRule"/>
</dbReference>
<dbReference type="GO" id="GO:0046933">
    <property type="term" value="F:proton-transporting ATP synthase activity, rotational mechanism"/>
    <property type="evidence" value="ECO:0007669"/>
    <property type="project" value="UniProtKB-UniRule"/>
</dbReference>
<dbReference type="GO" id="GO:0042777">
    <property type="term" value="P:proton motive force-driven plasma membrane ATP synthesis"/>
    <property type="evidence" value="ECO:0007669"/>
    <property type="project" value="UniProtKB-UniRule"/>
</dbReference>
<dbReference type="CDD" id="cd12151">
    <property type="entry name" value="F1-ATPase_gamma"/>
    <property type="match status" value="1"/>
</dbReference>
<dbReference type="FunFam" id="1.10.287.80:FF:000005">
    <property type="entry name" value="ATP synthase gamma chain"/>
    <property type="match status" value="2"/>
</dbReference>
<dbReference type="FunFam" id="3.40.1380.10:FF:000001">
    <property type="entry name" value="ATP synthase gamma chain"/>
    <property type="match status" value="1"/>
</dbReference>
<dbReference type="Gene3D" id="3.40.1380.10">
    <property type="match status" value="1"/>
</dbReference>
<dbReference type="Gene3D" id="1.10.287.80">
    <property type="entry name" value="ATP synthase, gamma subunit, helix hairpin domain"/>
    <property type="match status" value="1"/>
</dbReference>
<dbReference type="HAMAP" id="MF_00815">
    <property type="entry name" value="ATP_synth_gamma_bact"/>
    <property type="match status" value="1"/>
</dbReference>
<dbReference type="InterPro" id="IPR035968">
    <property type="entry name" value="ATP_synth_F1_ATPase_gsu"/>
</dbReference>
<dbReference type="InterPro" id="IPR000131">
    <property type="entry name" value="ATP_synth_F1_gsu"/>
</dbReference>
<dbReference type="InterPro" id="IPR023632">
    <property type="entry name" value="ATP_synth_F1_gsu_CS"/>
</dbReference>
<dbReference type="NCBIfam" id="TIGR01146">
    <property type="entry name" value="ATPsyn_F1gamma"/>
    <property type="match status" value="1"/>
</dbReference>
<dbReference type="NCBIfam" id="NF004144">
    <property type="entry name" value="PRK05621.1-1"/>
    <property type="match status" value="1"/>
</dbReference>
<dbReference type="PANTHER" id="PTHR11693">
    <property type="entry name" value="ATP SYNTHASE GAMMA CHAIN"/>
    <property type="match status" value="1"/>
</dbReference>
<dbReference type="PANTHER" id="PTHR11693:SF22">
    <property type="entry name" value="ATP SYNTHASE SUBUNIT GAMMA, MITOCHONDRIAL"/>
    <property type="match status" value="1"/>
</dbReference>
<dbReference type="Pfam" id="PF00231">
    <property type="entry name" value="ATP-synt"/>
    <property type="match status" value="1"/>
</dbReference>
<dbReference type="PRINTS" id="PR00126">
    <property type="entry name" value="ATPASEGAMMA"/>
</dbReference>
<dbReference type="SUPFAM" id="SSF52943">
    <property type="entry name" value="ATP synthase (F1-ATPase), gamma subunit"/>
    <property type="match status" value="1"/>
</dbReference>
<dbReference type="PROSITE" id="PS00153">
    <property type="entry name" value="ATPASE_GAMMA"/>
    <property type="match status" value="1"/>
</dbReference>
<gene>
    <name evidence="1" type="primary">atpG</name>
    <name type="ordered locus">CKO_00071</name>
</gene>
<reference key="1">
    <citation type="submission" date="2007-08" db="EMBL/GenBank/DDBJ databases">
        <authorList>
            <consortium name="The Citrobacter koseri Genome Sequencing Project"/>
            <person name="McClelland M."/>
            <person name="Sanderson E.K."/>
            <person name="Porwollik S."/>
            <person name="Spieth J."/>
            <person name="Clifton W.S."/>
            <person name="Latreille P."/>
            <person name="Courtney L."/>
            <person name="Wang C."/>
            <person name="Pepin K."/>
            <person name="Bhonagiri V."/>
            <person name="Nash W."/>
            <person name="Johnson M."/>
            <person name="Thiruvilangam P."/>
            <person name="Wilson R."/>
        </authorList>
    </citation>
    <scope>NUCLEOTIDE SEQUENCE [LARGE SCALE GENOMIC DNA]</scope>
    <source>
        <strain>ATCC BAA-895 / CDC 4225-83 / SGSC4696</strain>
    </source>
</reference>
<keyword id="KW-0066">ATP synthesis</keyword>
<keyword id="KW-0997">Cell inner membrane</keyword>
<keyword id="KW-1003">Cell membrane</keyword>
<keyword id="KW-0139">CF(1)</keyword>
<keyword id="KW-0375">Hydrogen ion transport</keyword>
<keyword id="KW-0406">Ion transport</keyword>
<keyword id="KW-0472">Membrane</keyword>
<keyword id="KW-1185">Reference proteome</keyword>
<keyword id="KW-0813">Transport</keyword>
<name>ATPG_CITK8</name>
<feature type="chain" id="PRO_1000053189" description="ATP synthase gamma chain">
    <location>
        <begin position="1"/>
        <end position="287"/>
    </location>
</feature>
<accession>A8ACN7</accession>